<name>FBL14_ARATH</name>
<protein>
    <recommendedName>
        <fullName>F-box/LRR-repeat protein 14</fullName>
    </recommendedName>
</protein>
<sequence length="480" mass="53598">MFIGIAYLGGDRQMDELPDHLVWDILSKLHTTDDRNSLSLSCKRFFSLDNEQRYSLRIGCGLVPASDALLSLCRRFPNLSKVEIIYSGWMSKLGKQVDDQGLLVLTTNCHSLTDLTLSFCTFITDVGIGHLSSCPELSSLKLNFAPRITGCGVLSLAVGCKKLRRLHLIRCLNVASVEWLEYFGKLETLEELCIKNCRAIGEGDLIKLRNSWRKLTSLQFEVDANYRYMKVYDQLDVERWPKQLVPCDSLVELSLGNCIIAPGRGLACVLRNCKNLEKLHLDMCTGVSDSDIIALVQKASHLRSISLRVPSDFTLPLLNNITLRLTDESLSAIAQHCSKLESFKISFSDGEFPSLFSFTLQGIITLIQKCPVRELSLDHVCVFNDMGMEALCSAQKLEILELVHCQEVSDEGLILVSQFPSLNVLKLSKCLGVTDDGMRPLVGSHKLELLVVEDCPQVSRRGVHGAATSVSFKQDLSWMY</sequence>
<evidence type="ECO:0000255" key="1">
    <source>
        <dbReference type="PROSITE-ProRule" id="PRU00080"/>
    </source>
</evidence>
<evidence type="ECO:0000303" key="2">
    <source>
    </source>
</evidence>
<keyword id="KW-0025">Alternative splicing</keyword>
<keyword id="KW-0433">Leucine-rich repeat</keyword>
<keyword id="KW-1185">Reference proteome</keyword>
<keyword id="KW-0677">Repeat</keyword>
<proteinExistence type="evidence at transcript level"/>
<comment type="alternative products">
    <event type="alternative splicing"/>
    <isoform>
        <id>Q3EC97-1</id>
        <name>1</name>
        <sequence type="displayed"/>
    </isoform>
    <isoform>
        <id>Q3EC97-2</id>
        <name>2</name>
        <sequence type="described" ref="VSP_022377"/>
    </isoform>
</comment>
<feature type="chain" id="PRO_0000272254" description="F-box/LRR-repeat protein 14">
    <location>
        <begin position="1"/>
        <end position="480"/>
    </location>
</feature>
<feature type="domain" description="F-box" evidence="1">
    <location>
        <begin position="11"/>
        <end position="58"/>
    </location>
</feature>
<feature type="repeat" description="LRR 1">
    <location>
        <begin position="61"/>
        <end position="86"/>
    </location>
</feature>
<feature type="repeat" description="LRR 2">
    <location>
        <begin position="94"/>
        <end position="119"/>
    </location>
</feature>
<feature type="repeat" description="LRR 3">
    <location>
        <begin position="120"/>
        <end position="144"/>
    </location>
</feature>
<feature type="repeat" description="LRR 4">
    <location>
        <begin position="145"/>
        <end position="170"/>
    </location>
</feature>
<feature type="repeat" description="LRR 5">
    <location>
        <begin position="171"/>
        <end position="196"/>
    </location>
</feature>
<feature type="repeat" description="LRR 6">
    <location>
        <begin position="197"/>
        <end position="222"/>
    </location>
</feature>
<feature type="repeat" description="LRR 7">
    <location>
        <begin position="229"/>
        <end position="257"/>
    </location>
</feature>
<feature type="repeat" description="LRR 8">
    <location>
        <begin position="258"/>
        <end position="283"/>
    </location>
</feature>
<feature type="repeat" description="LRR 9">
    <location>
        <begin position="284"/>
        <end position="309"/>
    </location>
</feature>
<feature type="repeat" description="LRR 10">
    <location>
        <begin position="322"/>
        <end position="347"/>
    </location>
</feature>
<feature type="repeat" description="LRR 11">
    <location>
        <begin position="355"/>
        <end position="379"/>
    </location>
</feature>
<feature type="repeat" description="LRR 12">
    <location>
        <begin position="380"/>
        <end position="404"/>
    </location>
</feature>
<feature type="repeat" description="LRR 13">
    <location>
        <begin position="405"/>
        <end position="429"/>
    </location>
</feature>
<feature type="repeat" description="LRR 14">
    <location>
        <begin position="430"/>
        <end position="454"/>
    </location>
</feature>
<feature type="repeat" description="LRR 15">
    <location>
        <begin position="455"/>
        <end position="480"/>
    </location>
</feature>
<feature type="splice variant" id="VSP_022377" description="In isoform 2." evidence="2">
    <location>
        <begin position="1"/>
        <end position="13"/>
    </location>
</feature>
<dbReference type="EMBL" id="AC018849">
    <property type="protein sequence ID" value="AAF27118.1"/>
    <property type="molecule type" value="Genomic_DNA"/>
</dbReference>
<dbReference type="EMBL" id="CP002684">
    <property type="protein sequence ID" value="AEE36421.1"/>
    <property type="molecule type" value="Genomic_DNA"/>
</dbReference>
<dbReference type="EMBL" id="CP002684">
    <property type="protein sequence ID" value="AEE36422.1"/>
    <property type="molecule type" value="Genomic_DNA"/>
</dbReference>
<dbReference type="EMBL" id="CP002684">
    <property type="protein sequence ID" value="AEE36423.1"/>
    <property type="molecule type" value="Genomic_DNA"/>
</dbReference>
<dbReference type="EMBL" id="BT002966">
    <property type="protein sequence ID" value="AAO22775.1"/>
    <property type="molecule type" value="mRNA"/>
</dbReference>
<dbReference type="EMBL" id="BT004407">
    <property type="protein sequence ID" value="AAO42401.1"/>
    <property type="molecule type" value="mRNA"/>
</dbReference>
<dbReference type="PIR" id="G96837">
    <property type="entry name" value="G96837"/>
</dbReference>
<dbReference type="RefSeq" id="NP_565240.1">
    <molecule id="Q3EC97-2"/>
    <property type="nucleotide sequence ID" value="NM_106705.3"/>
</dbReference>
<dbReference type="RefSeq" id="NP_974191.1">
    <molecule id="Q3EC97-1"/>
    <property type="nucleotide sequence ID" value="NM_202462.1"/>
</dbReference>
<dbReference type="RefSeq" id="NP_974192.1">
    <molecule id="Q3EC97-2"/>
    <property type="nucleotide sequence ID" value="NM_202463.1"/>
</dbReference>
<dbReference type="SMR" id="Q3EC97"/>
<dbReference type="FunCoup" id="Q3EC97">
    <property type="interactions" value="13"/>
</dbReference>
<dbReference type="STRING" id="3702.Q3EC97"/>
<dbReference type="iPTMnet" id="Q3EC97"/>
<dbReference type="PaxDb" id="3702-AT1G80570.2"/>
<dbReference type="ProteomicsDB" id="222497">
    <molecule id="Q3EC97-1"/>
</dbReference>
<dbReference type="EnsemblPlants" id="AT1G80570.1">
    <molecule id="Q3EC97-2"/>
    <property type="protein sequence ID" value="AT1G80570.1"/>
    <property type="gene ID" value="AT1G80570"/>
</dbReference>
<dbReference type="EnsemblPlants" id="AT1G80570.2">
    <molecule id="Q3EC97-1"/>
    <property type="protein sequence ID" value="AT1G80570.2"/>
    <property type="gene ID" value="AT1G80570"/>
</dbReference>
<dbReference type="EnsemblPlants" id="AT1G80570.3">
    <molecule id="Q3EC97-2"/>
    <property type="protein sequence ID" value="AT1G80570.3"/>
    <property type="gene ID" value="AT1G80570"/>
</dbReference>
<dbReference type="GeneID" id="844396"/>
<dbReference type="Gramene" id="AT1G80570.1">
    <molecule id="Q3EC97-2"/>
    <property type="protein sequence ID" value="AT1G80570.1"/>
    <property type="gene ID" value="AT1G80570"/>
</dbReference>
<dbReference type="Gramene" id="AT1G80570.2">
    <molecule id="Q3EC97-1"/>
    <property type="protein sequence ID" value="AT1G80570.2"/>
    <property type="gene ID" value="AT1G80570"/>
</dbReference>
<dbReference type="Gramene" id="AT1G80570.3">
    <molecule id="Q3EC97-2"/>
    <property type="protein sequence ID" value="AT1G80570.3"/>
    <property type="gene ID" value="AT1G80570"/>
</dbReference>
<dbReference type="KEGG" id="ath:AT1G80570"/>
<dbReference type="Araport" id="AT1G80570"/>
<dbReference type="TAIR" id="AT1G80570"/>
<dbReference type="eggNOG" id="KOG1947">
    <property type="taxonomic scope" value="Eukaryota"/>
</dbReference>
<dbReference type="InParanoid" id="Q3EC97"/>
<dbReference type="PhylomeDB" id="Q3EC97"/>
<dbReference type="PRO" id="PR:Q3EC97"/>
<dbReference type="Proteomes" id="UP000006548">
    <property type="component" value="Chromosome 1"/>
</dbReference>
<dbReference type="ExpressionAtlas" id="Q3EC97">
    <property type="expression patterns" value="baseline and differential"/>
</dbReference>
<dbReference type="CDD" id="cd22159">
    <property type="entry name" value="F-box_AtTIR1-like"/>
    <property type="match status" value="1"/>
</dbReference>
<dbReference type="FunFam" id="1.20.1280.50:FF:000084">
    <property type="entry name" value="EIN3-binding F-box protein 1"/>
    <property type="match status" value="1"/>
</dbReference>
<dbReference type="FunFam" id="3.80.10.10:FF:000653">
    <property type="entry name" value="F-box/LRR-repeat protein 14"/>
    <property type="match status" value="1"/>
</dbReference>
<dbReference type="FunFam" id="3.80.10.10:FF:001663">
    <property type="entry name" value="F-box/LRR-repeat protein 14"/>
    <property type="match status" value="2"/>
</dbReference>
<dbReference type="Gene3D" id="1.20.1280.50">
    <property type="match status" value="1"/>
</dbReference>
<dbReference type="Gene3D" id="3.80.10.10">
    <property type="entry name" value="Ribonuclease Inhibitor"/>
    <property type="match status" value="3"/>
</dbReference>
<dbReference type="InterPro" id="IPR001810">
    <property type="entry name" value="F-box_dom"/>
</dbReference>
<dbReference type="InterPro" id="IPR001611">
    <property type="entry name" value="Leu-rich_rpt"/>
</dbReference>
<dbReference type="InterPro" id="IPR006553">
    <property type="entry name" value="Leu-rich_rpt_Cys-con_subtyp"/>
</dbReference>
<dbReference type="InterPro" id="IPR032675">
    <property type="entry name" value="LRR_dom_sf"/>
</dbReference>
<dbReference type="PANTHER" id="PTHR13318:SF182">
    <property type="entry name" value="F-BOX_LRR-REPEAT PROTEIN 14"/>
    <property type="match status" value="1"/>
</dbReference>
<dbReference type="PANTHER" id="PTHR13318">
    <property type="entry name" value="PARTNER OF PAIRED, ISOFORM B-RELATED"/>
    <property type="match status" value="1"/>
</dbReference>
<dbReference type="Pfam" id="PF13516">
    <property type="entry name" value="LRR_6"/>
    <property type="match status" value="2"/>
</dbReference>
<dbReference type="SMART" id="SM00367">
    <property type="entry name" value="LRR_CC"/>
    <property type="match status" value="6"/>
</dbReference>
<dbReference type="SUPFAM" id="SSF52047">
    <property type="entry name" value="RNI-like"/>
    <property type="match status" value="1"/>
</dbReference>
<dbReference type="PROSITE" id="PS50181">
    <property type="entry name" value="FBOX"/>
    <property type="match status" value="1"/>
</dbReference>
<accession>Q3EC97</accession>
<accession>Q9M8M4</accession>
<gene>
    <name type="primary">FBL14</name>
    <name type="ordered locus">At1g80570</name>
    <name type="ORF">T21F11.10</name>
</gene>
<reference key="1">
    <citation type="journal article" date="2000" name="Nature">
        <title>Sequence and analysis of chromosome 1 of the plant Arabidopsis thaliana.</title>
        <authorList>
            <person name="Theologis A."/>
            <person name="Ecker J.R."/>
            <person name="Palm C.J."/>
            <person name="Federspiel N.A."/>
            <person name="Kaul S."/>
            <person name="White O."/>
            <person name="Alonso J."/>
            <person name="Altafi H."/>
            <person name="Araujo R."/>
            <person name="Bowman C.L."/>
            <person name="Brooks S.Y."/>
            <person name="Buehler E."/>
            <person name="Chan A."/>
            <person name="Chao Q."/>
            <person name="Chen H."/>
            <person name="Cheuk R.F."/>
            <person name="Chin C.W."/>
            <person name="Chung M.K."/>
            <person name="Conn L."/>
            <person name="Conway A.B."/>
            <person name="Conway A.R."/>
            <person name="Creasy T.H."/>
            <person name="Dewar K."/>
            <person name="Dunn P."/>
            <person name="Etgu P."/>
            <person name="Feldblyum T.V."/>
            <person name="Feng J.-D."/>
            <person name="Fong B."/>
            <person name="Fujii C.Y."/>
            <person name="Gill J.E."/>
            <person name="Goldsmith A.D."/>
            <person name="Haas B."/>
            <person name="Hansen N.F."/>
            <person name="Hughes B."/>
            <person name="Huizar L."/>
            <person name="Hunter J.L."/>
            <person name="Jenkins J."/>
            <person name="Johnson-Hopson C."/>
            <person name="Khan S."/>
            <person name="Khaykin E."/>
            <person name="Kim C.J."/>
            <person name="Koo H.L."/>
            <person name="Kremenetskaia I."/>
            <person name="Kurtz D.B."/>
            <person name="Kwan A."/>
            <person name="Lam B."/>
            <person name="Langin-Hooper S."/>
            <person name="Lee A."/>
            <person name="Lee J.M."/>
            <person name="Lenz C.A."/>
            <person name="Li J.H."/>
            <person name="Li Y.-P."/>
            <person name="Lin X."/>
            <person name="Liu S.X."/>
            <person name="Liu Z.A."/>
            <person name="Luros J.S."/>
            <person name="Maiti R."/>
            <person name="Marziali A."/>
            <person name="Militscher J."/>
            <person name="Miranda M."/>
            <person name="Nguyen M."/>
            <person name="Nierman W.C."/>
            <person name="Osborne B.I."/>
            <person name="Pai G."/>
            <person name="Peterson J."/>
            <person name="Pham P.K."/>
            <person name="Rizzo M."/>
            <person name="Rooney T."/>
            <person name="Rowley D."/>
            <person name="Sakano H."/>
            <person name="Salzberg S.L."/>
            <person name="Schwartz J.R."/>
            <person name="Shinn P."/>
            <person name="Southwick A.M."/>
            <person name="Sun H."/>
            <person name="Tallon L.J."/>
            <person name="Tambunga G."/>
            <person name="Toriumi M.J."/>
            <person name="Town C.D."/>
            <person name="Utterback T."/>
            <person name="Van Aken S."/>
            <person name="Vaysberg M."/>
            <person name="Vysotskaia V.S."/>
            <person name="Walker M."/>
            <person name="Wu D."/>
            <person name="Yu G."/>
            <person name="Fraser C.M."/>
            <person name="Venter J.C."/>
            <person name="Davis R.W."/>
        </authorList>
    </citation>
    <scope>NUCLEOTIDE SEQUENCE [LARGE SCALE GENOMIC DNA]</scope>
    <source>
        <strain>cv. Columbia</strain>
    </source>
</reference>
<reference key="2">
    <citation type="journal article" date="2017" name="Plant J.">
        <title>Araport11: a complete reannotation of the Arabidopsis thaliana reference genome.</title>
        <authorList>
            <person name="Cheng C.Y."/>
            <person name="Krishnakumar V."/>
            <person name="Chan A.P."/>
            <person name="Thibaud-Nissen F."/>
            <person name="Schobel S."/>
            <person name="Town C.D."/>
        </authorList>
    </citation>
    <scope>GENOME REANNOTATION</scope>
    <source>
        <strain>cv. Columbia</strain>
    </source>
</reference>
<reference key="3">
    <citation type="journal article" date="2003" name="Science">
        <title>Empirical analysis of transcriptional activity in the Arabidopsis genome.</title>
        <authorList>
            <person name="Yamada K."/>
            <person name="Lim J."/>
            <person name="Dale J.M."/>
            <person name="Chen H."/>
            <person name="Shinn P."/>
            <person name="Palm C.J."/>
            <person name="Southwick A.M."/>
            <person name="Wu H.C."/>
            <person name="Kim C.J."/>
            <person name="Nguyen M."/>
            <person name="Pham P.K."/>
            <person name="Cheuk R.F."/>
            <person name="Karlin-Newmann G."/>
            <person name="Liu S.X."/>
            <person name="Lam B."/>
            <person name="Sakano H."/>
            <person name="Wu T."/>
            <person name="Yu G."/>
            <person name="Miranda M."/>
            <person name="Quach H.L."/>
            <person name="Tripp M."/>
            <person name="Chang C.H."/>
            <person name="Lee J.M."/>
            <person name="Toriumi M.J."/>
            <person name="Chan M.M."/>
            <person name="Tang C.C."/>
            <person name="Onodera C.S."/>
            <person name="Deng J.M."/>
            <person name="Akiyama K."/>
            <person name="Ansari Y."/>
            <person name="Arakawa T."/>
            <person name="Banh J."/>
            <person name="Banno F."/>
            <person name="Bowser L."/>
            <person name="Brooks S.Y."/>
            <person name="Carninci P."/>
            <person name="Chao Q."/>
            <person name="Choy N."/>
            <person name="Enju A."/>
            <person name="Goldsmith A.D."/>
            <person name="Gurjal M."/>
            <person name="Hansen N.F."/>
            <person name="Hayashizaki Y."/>
            <person name="Johnson-Hopson C."/>
            <person name="Hsuan V.W."/>
            <person name="Iida K."/>
            <person name="Karnes M."/>
            <person name="Khan S."/>
            <person name="Koesema E."/>
            <person name="Ishida J."/>
            <person name="Jiang P.X."/>
            <person name="Jones T."/>
            <person name="Kawai J."/>
            <person name="Kamiya A."/>
            <person name="Meyers C."/>
            <person name="Nakajima M."/>
            <person name="Narusaka M."/>
            <person name="Seki M."/>
            <person name="Sakurai T."/>
            <person name="Satou M."/>
            <person name="Tamse R."/>
            <person name="Vaysberg M."/>
            <person name="Wallender E.K."/>
            <person name="Wong C."/>
            <person name="Yamamura Y."/>
            <person name="Yuan S."/>
            <person name="Shinozaki K."/>
            <person name="Davis R.W."/>
            <person name="Theologis A."/>
            <person name="Ecker J.R."/>
        </authorList>
    </citation>
    <scope>NUCLEOTIDE SEQUENCE [LARGE SCALE MRNA] (ISOFORM 2)</scope>
    <source>
        <strain>cv. Columbia</strain>
    </source>
</reference>
<reference key="4">
    <citation type="journal article" date="2000" name="Trends Plant Sci.">
        <title>F-box proteins in Arabidopsis.</title>
        <authorList>
            <person name="Xiao W."/>
            <person name="Jang J.-C."/>
        </authorList>
    </citation>
    <scope>GENE FAMILY</scope>
    <scope>NOMENCLATURE</scope>
</reference>
<organism>
    <name type="scientific">Arabidopsis thaliana</name>
    <name type="common">Mouse-ear cress</name>
    <dbReference type="NCBI Taxonomy" id="3702"/>
    <lineage>
        <taxon>Eukaryota</taxon>
        <taxon>Viridiplantae</taxon>
        <taxon>Streptophyta</taxon>
        <taxon>Embryophyta</taxon>
        <taxon>Tracheophyta</taxon>
        <taxon>Spermatophyta</taxon>
        <taxon>Magnoliopsida</taxon>
        <taxon>eudicotyledons</taxon>
        <taxon>Gunneridae</taxon>
        <taxon>Pentapetalae</taxon>
        <taxon>rosids</taxon>
        <taxon>malvids</taxon>
        <taxon>Brassicales</taxon>
        <taxon>Brassicaceae</taxon>
        <taxon>Camelineae</taxon>
        <taxon>Arabidopsis</taxon>
    </lineage>
</organism>